<comment type="function">
    <text evidence="1 2 3 4 5">Component of the EKC/KEOPS complex that is required for the formation of a threonylcarbamoyl group on adenosine at position 37 (t(6)A37) in tRNAs that read codons beginning with adenine. The complex is probably involved in the transfer of the threonylcarbamoyl moiety of threonylcarbamoyl-AMP (TC-AMP) to the N6 group of A37. PCC1 functions as a dimerization module for the complex. The EKC/KEOPS complex also promotes both telomere uncapping and telomere elongation. The complex is required for efficient recruitment of transcriptional coactivators.</text>
</comment>
<comment type="subunit">
    <text evidence="1">Component of the EKC/KEOPS complex composed of at least BUD32, CGI121, GON7, KAE1 and PCC1; the whole complex dimerizes.</text>
</comment>
<comment type="interaction">
    <interactant intactId="EBI-1200990">
        <id>Q3E833</id>
    </interactant>
    <interactant intactId="EBI-912262">
        <id>Q03705</id>
        <label>CGI121</label>
    </interactant>
    <organismsDiffer>false</organismsDiffer>
    <experiments>3</experiments>
</comment>
<comment type="subcellular location">
    <subcellularLocation>
        <location evidence="6">Nucleus</location>
    </subcellularLocation>
    <subcellularLocation>
        <location evidence="6">Chromosome</location>
        <location evidence="6">Telomere</location>
    </subcellularLocation>
</comment>
<comment type="similarity">
    <text evidence="6">Belongs to the CTAG/PCC1 family.</text>
</comment>
<feature type="chain" id="PRO_0000245368" description="EKC/KEOPS complex subunit PCC1">
    <location>
        <begin position="1"/>
        <end position="88"/>
    </location>
</feature>
<feature type="strand" evidence="7">
    <location>
        <begin position="11"/>
        <end position="18"/>
    </location>
</feature>
<feature type="helix" evidence="7">
    <location>
        <begin position="22"/>
        <end position="31"/>
    </location>
</feature>
<feature type="turn" evidence="7">
    <location>
        <begin position="40"/>
        <end position="42"/>
    </location>
</feature>
<feature type="strand" evidence="7">
    <location>
        <begin position="43"/>
        <end position="50"/>
    </location>
</feature>
<feature type="strand" evidence="7">
    <location>
        <begin position="53"/>
        <end position="62"/>
    </location>
</feature>
<feature type="helix" evidence="7">
    <location>
        <begin position="63"/>
        <end position="88"/>
    </location>
</feature>
<proteinExistence type="evidence at protein level"/>
<gene>
    <name type="primary">PCC1</name>
    <name type="ordered locus">YKR095W-A</name>
</gene>
<dbReference type="EMBL" id="Z28320">
    <property type="status" value="NOT_ANNOTATED_CDS"/>
    <property type="molecule type" value="Genomic_DNA"/>
</dbReference>
<dbReference type="EMBL" id="Z28321">
    <property type="status" value="NOT_ANNOTATED_CDS"/>
    <property type="molecule type" value="Genomic_DNA"/>
</dbReference>
<dbReference type="EMBL" id="BK006944">
    <property type="protein sequence ID" value="DAA09246.1"/>
    <property type="molecule type" value="Genomic_DNA"/>
</dbReference>
<dbReference type="RefSeq" id="NP_878113.4">
    <property type="nucleotide sequence ID" value="NM_001184522.3"/>
</dbReference>
<dbReference type="PDB" id="4WX8">
    <property type="method" value="X-ray"/>
    <property type="resolution" value="2.99 A"/>
    <property type="chains" value="A/B/C=1-88"/>
</dbReference>
<dbReference type="PDB" id="4WXA">
    <property type="method" value="X-ray"/>
    <property type="resolution" value="2.44 A"/>
    <property type="chains" value="A/B/C=1-88"/>
</dbReference>
<dbReference type="PDBsum" id="4WX8"/>
<dbReference type="PDBsum" id="4WXA"/>
<dbReference type="SMR" id="Q3E833"/>
<dbReference type="BioGRID" id="37084">
    <property type="interactions" value="21"/>
</dbReference>
<dbReference type="ComplexPortal" id="CPX-995">
    <property type="entry name" value="KEOPS tRNA N6-adenosine threonylcarbamoyltransferase complex"/>
</dbReference>
<dbReference type="FunCoup" id="Q3E833">
    <property type="interactions" value="100"/>
</dbReference>
<dbReference type="IntAct" id="Q3E833">
    <property type="interactions" value="4"/>
</dbReference>
<dbReference type="MINT" id="Q3E833"/>
<dbReference type="STRING" id="4932.YKR095W-A"/>
<dbReference type="iPTMnet" id="Q3E833"/>
<dbReference type="PaxDb" id="4932-YKR095W-A"/>
<dbReference type="PeptideAtlas" id="Q3E833"/>
<dbReference type="EnsemblFungi" id="YKR095W-A_mRNA">
    <property type="protein sequence ID" value="YKR095W-A"/>
    <property type="gene ID" value="YKR095W-A"/>
</dbReference>
<dbReference type="GeneID" id="1500489"/>
<dbReference type="KEGG" id="sce:YKR095W-A"/>
<dbReference type="AGR" id="SGD:S000028512"/>
<dbReference type="SGD" id="S000028512">
    <property type="gene designation" value="PCC1"/>
</dbReference>
<dbReference type="VEuPathDB" id="FungiDB:YKR095W-A"/>
<dbReference type="eggNOG" id="ENOG502S7CS">
    <property type="taxonomic scope" value="Eukaryota"/>
</dbReference>
<dbReference type="HOGENOM" id="CLU_113770_5_0_1"/>
<dbReference type="InParanoid" id="Q3E833"/>
<dbReference type="OMA" id="KTIIECM"/>
<dbReference type="OrthoDB" id="10025739at2759"/>
<dbReference type="BioCyc" id="MetaCyc:G3O-32097-MONOMER"/>
<dbReference type="BioCyc" id="YEAST:G3O-32097-MONOMER"/>
<dbReference type="BioGRID-ORCS" id="1500489">
    <property type="hits" value="8 hits in 10 CRISPR screens"/>
</dbReference>
<dbReference type="EvolutionaryTrace" id="Q3E833"/>
<dbReference type="PRO" id="PR:Q3E833"/>
<dbReference type="Proteomes" id="UP000002311">
    <property type="component" value="Chromosome XI"/>
</dbReference>
<dbReference type="RNAct" id="Q3E833">
    <property type="molecule type" value="protein"/>
</dbReference>
<dbReference type="GO" id="GO:0000785">
    <property type="term" value="C:chromatin"/>
    <property type="evidence" value="ECO:0000314"/>
    <property type="project" value="SGD"/>
</dbReference>
<dbReference type="GO" id="GO:0000781">
    <property type="term" value="C:chromosome, telomeric region"/>
    <property type="evidence" value="ECO:0007669"/>
    <property type="project" value="UniProtKB-SubCell"/>
</dbReference>
<dbReference type="GO" id="GO:0000408">
    <property type="term" value="C:EKC/KEOPS complex"/>
    <property type="evidence" value="ECO:0000314"/>
    <property type="project" value="SGD"/>
</dbReference>
<dbReference type="GO" id="GO:0005654">
    <property type="term" value="C:nucleoplasm"/>
    <property type="evidence" value="ECO:0000304"/>
    <property type="project" value="Reactome"/>
</dbReference>
<dbReference type="GO" id="GO:0031490">
    <property type="term" value="F:chromatin DNA binding"/>
    <property type="evidence" value="ECO:0000314"/>
    <property type="project" value="SGD"/>
</dbReference>
<dbReference type="GO" id="GO:0071444">
    <property type="term" value="P:cellular response to pheromone"/>
    <property type="evidence" value="ECO:0000315"/>
    <property type="project" value="SGD"/>
</dbReference>
<dbReference type="GO" id="GO:1990145">
    <property type="term" value="P:maintenance of translational fidelity"/>
    <property type="evidence" value="ECO:0000303"/>
    <property type="project" value="ComplexPortal"/>
</dbReference>
<dbReference type="GO" id="GO:0045944">
    <property type="term" value="P:positive regulation of transcription by RNA polymerase II"/>
    <property type="evidence" value="ECO:0000315"/>
    <property type="project" value="SGD"/>
</dbReference>
<dbReference type="GO" id="GO:0000723">
    <property type="term" value="P:telomere maintenance"/>
    <property type="evidence" value="ECO:0000303"/>
    <property type="project" value="ComplexPortal"/>
</dbReference>
<dbReference type="GO" id="GO:0000722">
    <property type="term" value="P:telomere maintenance via recombination"/>
    <property type="evidence" value="ECO:0000316"/>
    <property type="project" value="SGD"/>
</dbReference>
<dbReference type="GO" id="GO:0070525">
    <property type="term" value="P:tRNA threonylcarbamoyladenosine metabolic process"/>
    <property type="evidence" value="ECO:0000315"/>
    <property type="project" value="SGD"/>
</dbReference>
<dbReference type="GO" id="GO:0002949">
    <property type="term" value="P:tRNA threonylcarbamoyladenosine modification"/>
    <property type="evidence" value="ECO:0000303"/>
    <property type="project" value="ComplexPortal"/>
</dbReference>
<dbReference type="FunFam" id="3.30.310.50:FF:000014">
    <property type="entry name" value="EKC/KEOPS complex subunit PCC1"/>
    <property type="match status" value="1"/>
</dbReference>
<dbReference type="Gene3D" id="3.30.310.50">
    <property type="entry name" value="Alpha-D-phosphohexomutase, C-terminal domain"/>
    <property type="match status" value="1"/>
</dbReference>
<dbReference type="InterPro" id="IPR015419">
    <property type="entry name" value="CTAG/Pcc1"/>
</dbReference>
<dbReference type="PANTHER" id="PTHR31283">
    <property type="entry name" value="EKC/KEOPS COMPLEX SUBUNIT PCC1 FAMILY MEMBER"/>
    <property type="match status" value="1"/>
</dbReference>
<dbReference type="PANTHER" id="PTHR31283:SF5">
    <property type="entry name" value="EKC_KEOPS COMPLEX SUBUNIT LAGE3"/>
    <property type="match status" value="1"/>
</dbReference>
<dbReference type="Pfam" id="PF09341">
    <property type="entry name" value="Pcc1"/>
    <property type="match status" value="1"/>
</dbReference>
<protein>
    <recommendedName>
        <fullName>EKC/KEOPS complex subunit PCC1</fullName>
    </recommendedName>
    <alternativeName>
        <fullName>Polarized growth chromatin-associated controller 1</fullName>
    </alternativeName>
</protein>
<accession>Q3E833</accession>
<accession>D6VXF6</accession>
<reference key="1">
    <citation type="journal article" date="1994" name="Nature">
        <title>Complete DNA sequence of yeast chromosome XI.</title>
        <authorList>
            <person name="Dujon B."/>
            <person name="Alexandraki D."/>
            <person name="Andre B."/>
            <person name="Ansorge W."/>
            <person name="Baladron V."/>
            <person name="Ballesta J.P.G."/>
            <person name="Banrevi A."/>
            <person name="Bolle P.-A."/>
            <person name="Bolotin-Fukuhara M."/>
            <person name="Bossier P."/>
            <person name="Bou G."/>
            <person name="Boyer J."/>
            <person name="Buitrago M.J."/>
            <person name="Cheret G."/>
            <person name="Colleaux L."/>
            <person name="Daignan-Fornier B."/>
            <person name="del Rey F."/>
            <person name="Dion C."/>
            <person name="Domdey H."/>
            <person name="Duesterhoeft A."/>
            <person name="Duesterhus S."/>
            <person name="Entian K.-D."/>
            <person name="Erfle H."/>
            <person name="Esteban P.F."/>
            <person name="Feldmann H."/>
            <person name="Fernandes L."/>
            <person name="Fobo G.M."/>
            <person name="Fritz C."/>
            <person name="Fukuhara H."/>
            <person name="Gabel C."/>
            <person name="Gaillon L."/>
            <person name="Garcia-Cantalejo J.M."/>
            <person name="Garcia-Ramirez J.J."/>
            <person name="Gent M.E."/>
            <person name="Ghazvini M."/>
            <person name="Goffeau A."/>
            <person name="Gonzalez A."/>
            <person name="Grothues D."/>
            <person name="Guerreiro P."/>
            <person name="Hegemann J.H."/>
            <person name="Hewitt N."/>
            <person name="Hilger F."/>
            <person name="Hollenberg C.P."/>
            <person name="Horaitis O."/>
            <person name="Indge K.J."/>
            <person name="Jacquier A."/>
            <person name="James C.M."/>
            <person name="Jauniaux J.-C."/>
            <person name="Jimenez A."/>
            <person name="Keuchel H."/>
            <person name="Kirchrath L."/>
            <person name="Kleine K."/>
            <person name="Koetter P."/>
            <person name="Legrain P."/>
            <person name="Liebl S."/>
            <person name="Louis E.J."/>
            <person name="Maia e Silva A."/>
            <person name="Marck C."/>
            <person name="Monnier A.-L."/>
            <person name="Moestl D."/>
            <person name="Mueller S."/>
            <person name="Obermaier B."/>
            <person name="Oliver S.G."/>
            <person name="Pallier C."/>
            <person name="Pascolo S."/>
            <person name="Pfeiffer F."/>
            <person name="Philippsen P."/>
            <person name="Planta R.J."/>
            <person name="Pohl F.M."/>
            <person name="Pohl T.M."/>
            <person name="Poehlmann R."/>
            <person name="Portetelle D."/>
            <person name="Purnelle B."/>
            <person name="Puzos V."/>
            <person name="Ramezani Rad M."/>
            <person name="Rasmussen S.W."/>
            <person name="Remacha M.A."/>
            <person name="Revuelta J.L."/>
            <person name="Richard G.-F."/>
            <person name="Rieger M."/>
            <person name="Rodrigues-Pousada C."/>
            <person name="Rose M."/>
            <person name="Rupp T."/>
            <person name="Santos M.A."/>
            <person name="Schwager C."/>
            <person name="Sensen C."/>
            <person name="Skala J."/>
            <person name="Soares H."/>
            <person name="Sor F."/>
            <person name="Stegemann J."/>
            <person name="Tettelin H."/>
            <person name="Thierry A."/>
            <person name="Tzermia M."/>
            <person name="Urrestarazu L.A."/>
            <person name="van Dyck L."/>
            <person name="van Vliet-Reedijk J.C."/>
            <person name="Valens M."/>
            <person name="Vandenbol M."/>
            <person name="Vilela C."/>
            <person name="Vissers S."/>
            <person name="von Wettstein D."/>
            <person name="Voss H."/>
            <person name="Wiemann S."/>
            <person name="Xu G."/>
            <person name="Zimmermann J."/>
            <person name="Haasemann M."/>
            <person name="Becker I."/>
            <person name="Mewes H.-W."/>
        </authorList>
    </citation>
    <scope>NUCLEOTIDE SEQUENCE [LARGE SCALE GENOMIC DNA]</scope>
    <source>
        <strain>ATCC 204508 / S288c</strain>
    </source>
</reference>
<reference key="2">
    <citation type="journal article" date="2014" name="G3 (Bethesda)">
        <title>The reference genome sequence of Saccharomyces cerevisiae: Then and now.</title>
        <authorList>
            <person name="Engel S.R."/>
            <person name="Dietrich F.S."/>
            <person name="Fisk D.G."/>
            <person name="Binkley G."/>
            <person name="Balakrishnan R."/>
            <person name="Costanzo M.C."/>
            <person name="Dwight S.S."/>
            <person name="Hitz B.C."/>
            <person name="Karra K."/>
            <person name="Nash R.S."/>
            <person name="Weng S."/>
            <person name="Wong E.D."/>
            <person name="Lloyd P."/>
            <person name="Skrzypek M.S."/>
            <person name="Miyasato S.R."/>
            <person name="Simison M."/>
            <person name="Cherry J.M."/>
        </authorList>
    </citation>
    <scope>GENOME REANNOTATION</scope>
    <source>
        <strain>ATCC 204508 / S288c</strain>
    </source>
</reference>
<reference key="3">
    <citation type="journal article" date="2003" name="Genome Biol.">
        <title>Reinvestigation of the Saccharomyces cerevisiae genome annotation by comparison to the genome of a related fungus: Ashbya gossypii.</title>
        <authorList>
            <person name="Brachat S."/>
            <person name="Dietrich F.S."/>
            <person name="Voegeli S."/>
            <person name="Zhang Z."/>
            <person name="Stuart L."/>
            <person name="Lerch A."/>
            <person name="Gates K."/>
            <person name="Gaffney T.D."/>
            <person name="Philippsen P."/>
        </authorList>
    </citation>
    <scope>GENOME REANNOTATION</scope>
</reference>
<reference key="4">
    <citation type="journal article" date="2003" name="Science">
        <title>Finding functional features in Saccharomyces genomes by phylogenetic footprinting.</title>
        <authorList>
            <person name="Cliften P.F."/>
            <person name="Sudarsanam P."/>
            <person name="Desikan A."/>
            <person name="Fulton L."/>
            <person name="Fulton B."/>
            <person name="Majors J."/>
            <person name="Waterston R."/>
            <person name="Cohen B.A."/>
            <person name="Johnston M."/>
        </authorList>
    </citation>
    <scope>GENOME REANNOTATION</scope>
</reference>
<reference key="5">
    <citation type="journal article" date="2006" name="EMBO J.">
        <title>Yeast homolog of a cancer-testis antigen defines a new transcription complex.</title>
        <authorList>
            <person name="Kisseleva-Romanova E."/>
            <person name="Lopreiato R."/>
            <person name="Baudin-Baillieu A."/>
            <person name="Rousselle J.-C."/>
            <person name="Ilan L."/>
            <person name="Hofmann K."/>
            <person name="Namane A."/>
            <person name="Mann C."/>
            <person name="Libri D."/>
        </authorList>
    </citation>
    <scope>FUNCTION</scope>
    <scope>IDENTIFICATION BY MASS SPECTROMETRY</scope>
    <scope>IDENTIFICATION IN THE EKC/KEOPS COMPLEX</scope>
</reference>
<reference key="6">
    <citation type="journal article" date="2011" name="EMBO J.">
        <title>The highly conserved KEOPS/EKC complex is essential for a universal tRNA modification, t6A.</title>
        <authorList>
            <person name="Srinivasan M."/>
            <person name="Mehta P."/>
            <person name="Yu Y."/>
            <person name="Prugar E."/>
            <person name="Koonin E.V."/>
            <person name="Karzai A.W."/>
            <person name="Sternglanz R."/>
        </authorList>
    </citation>
    <scope>FUNCTION IN T(6)A37 FORMATION</scope>
</reference>
<reference key="7">
    <citation type="journal article" date="2011" name="Nucleic Acids Res.">
        <title>Gcn4 misregulation reveals a direct role for the evolutionary conserved EKC/KEOPS in the t6A modification of tRNAs.</title>
        <authorList>
            <person name="Daugeron M.C."/>
            <person name="Lenstra T.L."/>
            <person name="Frizzarin M."/>
            <person name="El Yacoubi B."/>
            <person name="Liu X."/>
            <person name="Baudin-Baillieu A."/>
            <person name="Lijnzaad P."/>
            <person name="Decourty L."/>
            <person name="Saveanu C."/>
            <person name="Jacquier A."/>
            <person name="Holstege F.C."/>
            <person name="de Crecy-Lagard V."/>
            <person name="van Tilbeurgh H."/>
            <person name="Libri D."/>
        </authorList>
    </citation>
    <scope>FUNCTION IN T(6)A37 FORMATION</scope>
</reference>
<reference key="8">
    <citation type="journal article" date="2013" name="Nucleic Acids Res.">
        <title>In vitro biosynthesis of a universal t6A tRNA modification in Archaea and Eukarya.</title>
        <authorList>
            <person name="Perrochia L."/>
            <person name="Crozat E."/>
            <person name="Hecker A."/>
            <person name="Zhang W."/>
            <person name="Bareille J."/>
            <person name="Collinet B."/>
            <person name="van Tilbeurgh H."/>
            <person name="Forterre P."/>
            <person name="Basta T."/>
        </authorList>
    </citation>
    <scope>FUNCTION IN T(6)A TRNA MODIFICATION</scope>
</reference>
<reference key="9">
    <citation type="journal article" date="2013" name="Nucleic Acids Res.">
        <title>Reconstitution and characterization of eukaryotic N6-threonylcarbamoylation of tRNA using a minimal enzyme system.</title>
        <authorList>
            <person name="Wan L.C."/>
            <person name="Mao D.Y."/>
            <person name="Neculai D."/>
            <person name="Strecker J."/>
            <person name="Chiovitti D."/>
            <person name="Kurinov I."/>
            <person name="Poda G."/>
            <person name="Thevakumaran N."/>
            <person name="Yuan F."/>
            <person name="Szilard R.K."/>
            <person name="Lissina E."/>
            <person name="Nislow C."/>
            <person name="Caudy A.A."/>
            <person name="Durocher D."/>
            <person name="Sicheri F."/>
        </authorList>
    </citation>
    <scope>FUNCTION IN THE EKC/KEOPS COMPLEX</scope>
</reference>
<sequence length="88" mass="9993">MTSKREKSLDHTLELKIPFETERQATIATKVLSPDPILKPQDFQVDYSSEKNVMLVQFRSIDDRVLRVGVSSIIDSIKTIVEAMDVLS</sequence>
<organism>
    <name type="scientific">Saccharomyces cerevisiae (strain ATCC 204508 / S288c)</name>
    <name type="common">Baker's yeast</name>
    <dbReference type="NCBI Taxonomy" id="559292"/>
    <lineage>
        <taxon>Eukaryota</taxon>
        <taxon>Fungi</taxon>
        <taxon>Dikarya</taxon>
        <taxon>Ascomycota</taxon>
        <taxon>Saccharomycotina</taxon>
        <taxon>Saccharomycetes</taxon>
        <taxon>Saccharomycetales</taxon>
        <taxon>Saccharomycetaceae</taxon>
        <taxon>Saccharomyces</taxon>
    </lineage>
</organism>
<evidence type="ECO:0000269" key="1">
    <source>
    </source>
</evidence>
<evidence type="ECO:0000269" key="2">
    <source>
    </source>
</evidence>
<evidence type="ECO:0000269" key="3">
    <source>
    </source>
</evidence>
<evidence type="ECO:0000269" key="4">
    <source>
    </source>
</evidence>
<evidence type="ECO:0000269" key="5">
    <source>
    </source>
</evidence>
<evidence type="ECO:0000305" key="6"/>
<evidence type="ECO:0007829" key="7">
    <source>
        <dbReference type="PDB" id="4WXA"/>
    </source>
</evidence>
<name>PCC1_YEAST</name>
<keyword id="KW-0002">3D-structure</keyword>
<keyword id="KW-0010">Activator</keyword>
<keyword id="KW-0158">Chromosome</keyword>
<keyword id="KW-0539">Nucleus</keyword>
<keyword id="KW-1185">Reference proteome</keyword>
<keyword id="KW-0779">Telomere</keyword>
<keyword id="KW-0804">Transcription</keyword>
<keyword id="KW-0805">Transcription regulation</keyword>
<keyword id="KW-0819">tRNA processing</keyword>